<keyword id="KW-1003">Cell membrane</keyword>
<keyword id="KW-0961">Cell wall biogenesis/degradation</keyword>
<keyword id="KW-0328">Glycosyltransferase</keyword>
<keyword id="KW-0472">Membrane</keyword>
<keyword id="KW-0808">Transferase</keyword>
<keyword id="KW-0812">Transmembrane</keyword>
<keyword id="KW-1133">Transmembrane helix</keyword>
<evidence type="ECO:0000255" key="1"/>
<evidence type="ECO:0000269" key="2">
    <source>
    </source>
</evidence>
<evidence type="ECO:0000305" key="3"/>
<reference key="1">
    <citation type="journal article" date="1990" name="Mol. Microbiol.">
        <title>Isolation of a chitin synthase gene (CHS1) from Candida albicans by expression in Saccharomyces cerevisiae.</title>
        <authorList>
            <person name="Au-Young J."/>
            <person name="Robbins P.W."/>
        </authorList>
    </citation>
    <scope>NUCLEOTIDE SEQUENCE [GENOMIC DNA]</scope>
    <scope>FUNCTION</scope>
    <source>
        <strain>73/055</strain>
    </source>
</reference>
<reference key="2">
    <citation type="journal article" date="1995" name="Microbiology">
        <title>Isolation of canCHS1A, a variant gene of Candida albicans chitin synthase.</title>
        <authorList>
            <person name="Sudoh M."/>
            <person name="Watanabe M."/>
            <person name="Mio T."/>
            <person name="Nagahashi S."/>
            <person name="Yamada-Okabe H."/>
            <person name="Takagi M."/>
            <person name="Arisawa M."/>
        </authorList>
    </citation>
    <scope>NUCLEOTIDE SEQUENCE [GENOMIC DNA]</scope>
    <source>
        <strain>ATCC 10259 / CBS 5796 / DSM 5817 / JCM 2078 / NBRC 1060 / 2024</strain>
    </source>
</reference>
<proteinExistence type="evidence at transcript level"/>
<sequence length="776" mass="88230">MHNINNGYVPNREKTITKRKVRLVGGKAGNLVLENPVPTELRKVLTRTESPFGEFTNMTYTACTSQPDTFSAEGFTLRAAKYGRETEIVICITMYNEDEVAFARTMHGVMKNIAHLCSRHKSKIWGKDSWKKVQVIIVADGRNKVQQSVLELLTATGCYQENLARPYVNNSKVNAHLFEYTTQISIDENLKFKGDEKNLAPVQVLFCLKESNQKKINSHRWLFNAFCPVLDPNVIVLLDVGTKPDNHAIYNLWKAFDRDSNVAGAAGEIKAMKGKGWINLTNPLVASQNFEYKLSNILDKPLESLFGYISVLPGALSAYRYIALKNHDDGTGPLASYFKGEDLLCSHDKDKENTKANFFEANMYLAEDRILCWELVSKRNDNWVLKFVKSATGETDVPETIAEFLSQRRRWINGAFFAALYSLYHFRKIWTTDHSYARKFWLHVEEFIYQLVSLLFSFFSLSNFYLTFYFLTGSLVSYKSLGKKGGFWIFTLFNYLCIGVLTSLFIVSIGNRPHASKNIFKTLIILLTICALYALVVGFVFVINTIATFGTGGTSTYVLVSIVVSLLSTYGLYTLMSILYLDPWHMLTCSVQYFLMIPSYTCTLQIFAFCNTHDVSWGTKGDNNPKEDLSNQYIIEKNASGEFEAVIVDTNIDEDYLETLYNIRSKRSNKKVALGHSEKTPLDGDDYAKDVRTRVVLFWMIANLVFIMTMVQVYEPGDTGRNIYLAFILWAVAVLALVRAIGSLGYLIQTYARFFVESKSKWMKRGYTAPSHNPLN</sequence>
<dbReference type="EC" id="2.4.1.16"/>
<dbReference type="EMBL" id="X52420">
    <property type="protein sequence ID" value="CAA36671.1"/>
    <property type="molecule type" value="Genomic_DNA"/>
</dbReference>
<dbReference type="EMBL" id="D43627">
    <property type="protein sequence ID" value="BAA07738.1"/>
    <property type="molecule type" value="Genomic_DNA"/>
</dbReference>
<dbReference type="SMR" id="P23316"/>
<dbReference type="BindingDB" id="P23316"/>
<dbReference type="ChEMBL" id="CHEMBL3480"/>
<dbReference type="VEuPathDB" id="FungiDB:C7_02770W_A"/>
<dbReference type="VEuPathDB" id="FungiDB:CAWG_05611"/>
<dbReference type="BRENDA" id="2.4.1.16">
    <property type="organism ID" value="1096"/>
</dbReference>
<dbReference type="PHI-base" id="PHI:7232"/>
<dbReference type="GO" id="GO:0030428">
    <property type="term" value="C:cell septum"/>
    <property type="evidence" value="ECO:0007669"/>
    <property type="project" value="TreeGrafter"/>
</dbReference>
<dbReference type="GO" id="GO:0005886">
    <property type="term" value="C:plasma membrane"/>
    <property type="evidence" value="ECO:0007669"/>
    <property type="project" value="UniProtKB-SubCell"/>
</dbReference>
<dbReference type="GO" id="GO:0004100">
    <property type="term" value="F:chitin synthase activity"/>
    <property type="evidence" value="ECO:0007669"/>
    <property type="project" value="UniProtKB-EC"/>
</dbReference>
<dbReference type="GO" id="GO:0071555">
    <property type="term" value="P:cell wall organization"/>
    <property type="evidence" value="ECO:0007669"/>
    <property type="project" value="UniProtKB-KW"/>
</dbReference>
<dbReference type="GO" id="GO:0006031">
    <property type="term" value="P:chitin biosynthetic process"/>
    <property type="evidence" value="ECO:0007669"/>
    <property type="project" value="InterPro"/>
</dbReference>
<dbReference type="CDD" id="cd04190">
    <property type="entry name" value="Chitin_synth_C"/>
    <property type="match status" value="1"/>
</dbReference>
<dbReference type="InterPro" id="IPR004835">
    <property type="entry name" value="Chitin_synth"/>
</dbReference>
<dbReference type="InterPro" id="IPR004834">
    <property type="entry name" value="Chitin_synth_fun"/>
</dbReference>
<dbReference type="InterPro" id="IPR013616">
    <property type="entry name" value="Chitin_synth_N"/>
</dbReference>
<dbReference type="InterPro" id="IPR029044">
    <property type="entry name" value="Nucleotide-diphossugar_trans"/>
</dbReference>
<dbReference type="PANTHER" id="PTHR22914">
    <property type="entry name" value="CHITIN SYNTHASE"/>
    <property type="match status" value="1"/>
</dbReference>
<dbReference type="PANTHER" id="PTHR22914:SF38">
    <property type="entry name" value="CHITIN SYNTHASE 2"/>
    <property type="match status" value="1"/>
</dbReference>
<dbReference type="Pfam" id="PF01644">
    <property type="entry name" value="Chitin_synth_1"/>
    <property type="match status" value="1"/>
</dbReference>
<dbReference type="Pfam" id="PF08407">
    <property type="entry name" value="Chitin_synth_1N"/>
    <property type="match status" value="1"/>
</dbReference>
<dbReference type="SUPFAM" id="SSF53448">
    <property type="entry name" value="Nucleotide-diphospho-sugar transferases"/>
    <property type="match status" value="1"/>
</dbReference>
<gene>
    <name type="primary">CHS1</name>
</gene>
<comment type="function">
    <text evidence="2">Polymerizes chitin, a structural polymer of the cell wall and septum, by transferring the sugar moiety of UDP-GlcNAc to the non-reducing end of the growing chitin polymer (PubMed:2140148). Also involved in forming cross walls in the hyphal phase (PubMed:2140148).</text>
</comment>
<comment type="catalytic activity">
    <reaction>
        <text>[(1-&gt;4)-N-acetyl-beta-D-glucosaminyl](n) + UDP-N-acetyl-alpha-D-glucosamine = [(1-&gt;4)-N-acetyl-beta-D-glucosaminyl](n+1) + UDP + H(+)</text>
        <dbReference type="Rhea" id="RHEA:16637"/>
        <dbReference type="Rhea" id="RHEA-COMP:9593"/>
        <dbReference type="Rhea" id="RHEA-COMP:9595"/>
        <dbReference type="ChEBI" id="CHEBI:15378"/>
        <dbReference type="ChEBI" id="CHEBI:17029"/>
        <dbReference type="ChEBI" id="CHEBI:57705"/>
        <dbReference type="ChEBI" id="CHEBI:58223"/>
        <dbReference type="EC" id="2.4.1.16"/>
    </reaction>
</comment>
<comment type="activity regulation">
    <text>Requires proteolytic activation.</text>
</comment>
<comment type="subcellular location">
    <subcellularLocation>
        <location evidence="3">Cell membrane</location>
        <topology evidence="1">Multi-pass membrane protein</topology>
    </subcellularLocation>
</comment>
<comment type="developmental stage">
    <text>Yeast and hyphal stages, the latter having a higher specific activity.</text>
</comment>
<comment type="induction">
    <text>Under certain adverse conditions.</text>
</comment>
<comment type="similarity">
    <text evidence="3">Belongs to the chitin synthase family.</text>
</comment>
<comment type="caution">
    <text evidence="3">It is uncertain whether Met-1 or Met-58 is the initiator.</text>
</comment>
<name>CHS1_CANAX</name>
<protein>
    <recommendedName>
        <fullName>Chitin synthase 1</fullName>
        <ecNumber>2.4.1.16</ecNumber>
    </recommendedName>
    <alternativeName>
        <fullName>Chitin-UDP acetyl-glucosaminyl transferase 1</fullName>
    </alternativeName>
</protein>
<organism>
    <name type="scientific">Candida albicans</name>
    <name type="common">Yeast</name>
    <dbReference type="NCBI Taxonomy" id="5476"/>
    <lineage>
        <taxon>Eukaryota</taxon>
        <taxon>Fungi</taxon>
        <taxon>Dikarya</taxon>
        <taxon>Ascomycota</taxon>
        <taxon>Saccharomycotina</taxon>
        <taxon>Pichiomycetes</taxon>
        <taxon>Debaryomycetaceae</taxon>
        <taxon>Candida/Lodderomyces clade</taxon>
        <taxon>Candida</taxon>
    </lineage>
</organism>
<feature type="chain" id="PRO_0000193686" description="Chitin synthase 1">
    <location>
        <begin position="1"/>
        <end position="776"/>
    </location>
</feature>
<feature type="transmembrane region" description="Helical" evidence="1">
    <location>
        <begin position="451"/>
        <end position="471"/>
    </location>
</feature>
<feature type="transmembrane region" description="Helical" evidence="1">
    <location>
        <begin position="487"/>
        <end position="507"/>
    </location>
</feature>
<feature type="transmembrane region" description="Helical" evidence="1">
    <location>
        <begin position="523"/>
        <end position="543"/>
    </location>
</feature>
<feature type="transmembrane region" description="Helical" evidence="1">
    <location>
        <begin position="558"/>
        <end position="578"/>
    </location>
</feature>
<feature type="transmembrane region" description="Helical" evidence="1">
    <location>
        <begin position="695"/>
        <end position="714"/>
    </location>
</feature>
<feature type="transmembrane region" description="Helical" evidence="1">
    <location>
        <begin position="723"/>
        <end position="743"/>
    </location>
</feature>
<feature type="sequence conflict" description="In Ref. 2; BAA07738." evidence="3" ref="2">
    <location>
        <position position="446"/>
    </location>
</feature>
<accession>P23316</accession>